<comment type="function">
    <text evidence="1">Exhibits a very high intrinsic GTPase hydrolysis rate. Involved in the addition of a carboxymethylaminomethyl (cmnm) group at the wobble position (U34) of certain tRNAs, forming tRNA-cmnm(5)s(2)U34.</text>
</comment>
<comment type="cofactor">
    <cofactor evidence="1">
        <name>K(+)</name>
        <dbReference type="ChEBI" id="CHEBI:29103"/>
    </cofactor>
    <text evidence="1">Binds 1 potassium ion per subunit.</text>
</comment>
<comment type="subunit">
    <text evidence="1">Homodimer. Heterotetramer of two MnmE and two MnmG subunits.</text>
</comment>
<comment type="subcellular location">
    <subcellularLocation>
        <location evidence="1">Cytoplasm</location>
    </subcellularLocation>
</comment>
<comment type="similarity">
    <text evidence="1">Belongs to the TRAFAC class TrmE-Era-EngA-EngB-Septin-like GTPase superfamily. TrmE GTPase family.</text>
</comment>
<proteinExistence type="inferred from homology"/>
<gene>
    <name evidence="1" type="primary">mnmE</name>
    <name evidence="1" type="synonym">trmE</name>
    <name type="ordered locus">XC_4328</name>
</gene>
<organism>
    <name type="scientific">Xanthomonas campestris pv. campestris (strain 8004)</name>
    <dbReference type="NCBI Taxonomy" id="314565"/>
    <lineage>
        <taxon>Bacteria</taxon>
        <taxon>Pseudomonadati</taxon>
        <taxon>Pseudomonadota</taxon>
        <taxon>Gammaproteobacteria</taxon>
        <taxon>Lysobacterales</taxon>
        <taxon>Lysobacteraceae</taxon>
        <taxon>Xanthomonas</taxon>
    </lineage>
</organism>
<protein>
    <recommendedName>
        <fullName evidence="1">tRNA modification GTPase MnmE</fullName>
        <ecNumber evidence="1">3.6.-.-</ecNumber>
    </recommendedName>
</protein>
<feature type="chain" id="PRO_1000048906" description="tRNA modification GTPase MnmE">
    <location>
        <begin position="1"/>
        <end position="446"/>
    </location>
</feature>
<feature type="domain" description="TrmE-type G">
    <location>
        <begin position="216"/>
        <end position="368"/>
    </location>
</feature>
<feature type="binding site" evidence="1">
    <location>
        <position position="24"/>
    </location>
    <ligand>
        <name>(6S)-5-formyl-5,6,7,8-tetrahydrofolate</name>
        <dbReference type="ChEBI" id="CHEBI:57457"/>
    </ligand>
</feature>
<feature type="binding site" evidence="1">
    <location>
        <position position="81"/>
    </location>
    <ligand>
        <name>(6S)-5-formyl-5,6,7,8-tetrahydrofolate</name>
        <dbReference type="ChEBI" id="CHEBI:57457"/>
    </ligand>
</feature>
<feature type="binding site" evidence="1">
    <location>
        <position position="120"/>
    </location>
    <ligand>
        <name>(6S)-5-formyl-5,6,7,8-tetrahydrofolate</name>
        <dbReference type="ChEBI" id="CHEBI:57457"/>
    </ligand>
</feature>
<feature type="binding site" evidence="1">
    <location>
        <begin position="226"/>
        <end position="231"/>
    </location>
    <ligand>
        <name>GTP</name>
        <dbReference type="ChEBI" id="CHEBI:37565"/>
    </ligand>
</feature>
<feature type="binding site" evidence="1">
    <location>
        <position position="226"/>
    </location>
    <ligand>
        <name>K(+)</name>
        <dbReference type="ChEBI" id="CHEBI:29103"/>
    </ligand>
</feature>
<feature type="binding site" evidence="1">
    <location>
        <position position="230"/>
    </location>
    <ligand>
        <name>Mg(2+)</name>
        <dbReference type="ChEBI" id="CHEBI:18420"/>
    </ligand>
</feature>
<feature type="binding site" evidence="1">
    <location>
        <begin position="245"/>
        <end position="251"/>
    </location>
    <ligand>
        <name>GTP</name>
        <dbReference type="ChEBI" id="CHEBI:37565"/>
    </ligand>
</feature>
<feature type="binding site" evidence="1">
    <location>
        <position position="245"/>
    </location>
    <ligand>
        <name>K(+)</name>
        <dbReference type="ChEBI" id="CHEBI:29103"/>
    </ligand>
</feature>
<feature type="binding site" evidence="1">
    <location>
        <position position="247"/>
    </location>
    <ligand>
        <name>K(+)</name>
        <dbReference type="ChEBI" id="CHEBI:29103"/>
    </ligand>
</feature>
<feature type="binding site" evidence="1">
    <location>
        <position position="250"/>
    </location>
    <ligand>
        <name>K(+)</name>
        <dbReference type="ChEBI" id="CHEBI:29103"/>
    </ligand>
</feature>
<feature type="binding site" evidence="1">
    <location>
        <position position="251"/>
    </location>
    <ligand>
        <name>Mg(2+)</name>
        <dbReference type="ChEBI" id="CHEBI:18420"/>
    </ligand>
</feature>
<feature type="binding site" evidence="1">
    <location>
        <begin position="270"/>
        <end position="273"/>
    </location>
    <ligand>
        <name>GTP</name>
        <dbReference type="ChEBI" id="CHEBI:37565"/>
    </ligand>
</feature>
<feature type="binding site" evidence="1">
    <location>
        <position position="446"/>
    </location>
    <ligand>
        <name>(6S)-5-formyl-5,6,7,8-tetrahydrofolate</name>
        <dbReference type="ChEBI" id="CHEBI:57457"/>
    </ligand>
</feature>
<dbReference type="EC" id="3.6.-.-" evidence="1"/>
<dbReference type="EMBL" id="CP000050">
    <property type="protein sequence ID" value="AAY51363.1"/>
    <property type="molecule type" value="Genomic_DNA"/>
</dbReference>
<dbReference type="RefSeq" id="WP_011039299.1">
    <property type="nucleotide sequence ID" value="NZ_CP155948.1"/>
</dbReference>
<dbReference type="SMR" id="Q4UNL0"/>
<dbReference type="KEGG" id="xcb:XC_4328"/>
<dbReference type="HOGENOM" id="CLU_019624_4_1_6"/>
<dbReference type="Proteomes" id="UP000000420">
    <property type="component" value="Chromosome"/>
</dbReference>
<dbReference type="GO" id="GO:0005829">
    <property type="term" value="C:cytosol"/>
    <property type="evidence" value="ECO:0007669"/>
    <property type="project" value="TreeGrafter"/>
</dbReference>
<dbReference type="GO" id="GO:0005525">
    <property type="term" value="F:GTP binding"/>
    <property type="evidence" value="ECO:0007669"/>
    <property type="project" value="UniProtKB-UniRule"/>
</dbReference>
<dbReference type="GO" id="GO:0003924">
    <property type="term" value="F:GTPase activity"/>
    <property type="evidence" value="ECO:0007669"/>
    <property type="project" value="UniProtKB-UniRule"/>
</dbReference>
<dbReference type="GO" id="GO:0046872">
    <property type="term" value="F:metal ion binding"/>
    <property type="evidence" value="ECO:0007669"/>
    <property type="project" value="UniProtKB-KW"/>
</dbReference>
<dbReference type="GO" id="GO:0030488">
    <property type="term" value="P:tRNA methylation"/>
    <property type="evidence" value="ECO:0007669"/>
    <property type="project" value="TreeGrafter"/>
</dbReference>
<dbReference type="GO" id="GO:0002098">
    <property type="term" value="P:tRNA wobble uridine modification"/>
    <property type="evidence" value="ECO:0007669"/>
    <property type="project" value="TreeGrafter"/>
</dbReference>
<dbReference type="CDD" id="cd04164">
    <property type="entry name" value="trmE"/>
    <property type="match status" value="1"/>
</dbReference>
<dbReference type="CDD" id="cd14858">
    <property type="entry name" value="TrmE_N"/>
    <property type="match status" value="1"/>
</dbReference>
<dbReference type="FunFam" id="3.40.50.300:FF:001376">
    <property type="entry name" value="tRNA modification GTPase MnmE"/>
    <property type="match status" value="1"/>
</dbReference>
<dbReference type="Gene3D" id="3.40.50.300">
    <property type="entry name" value="P-loop containing nucleotide triphosphate hydrolases"/>
    <property type="match status" value="1"/>
</dbReference>
<dbReference type="Gene3D" id="3.30.1360.120">
    <property type="entry name" value="Probable tRNA modification gtpase trme, domain 1"/>
    <property type="match status" value="1"/>
</dbReference>
<dbReference type="Gene3D" id="1.20.120.430">
    <property type="entry name" value="tRNA modification GTPase MnmE domain 2"/>
    <property type="match status" value="1"/>
</dbReference>
<dbReference type="HAMAP" id="MF_00379">
    <property type="entry name" value="GTPase_MnmE"/>
    <property type="match status" value="1"/>
</dbReference>
<dbReference type="InterPro" id="IPR031168">
    <property type="entry name" value="G_TrmE"/>
</dbReference>
<dbReference type="InterPro" id="IPR006073">
    <property type="entry name" value="GTP-bd"/>
</dbReference>
<dbReference type="InterPro" id="IPR018948">
    <property type="entry name" value="GTP-bd_TrmE_N"/>
</dbReference>
<dbReference type="InterPro" id="IPR004520">
    <property type="entry name" value="GTPase_MnmE"/>
</dbReference>
<dbReference type="InterPro" id="IPR027368">
    <property type="entry name" value="MnmE_dom2"/>
</dbReference>
<dbReference type="InterPro" id="IPR025867">
    <property type="entry name" value="MnmE_helical"/>
</dbReference>
<dbReference type="InterPro" id="IPR027417">
    <property type="entry name" value="P-loop_NTPase"/>
</dbReference>
<dbReference type="InterPro" id="IPR005225">
    <property type="entry name" value="Small_GTP-bd"/>
</dbReference>
<dbReference type="InterPro" id="IPR027266">
    <property type="entry name" value="TrmE/GcvT_dom1"/>
</dbReference>
<dbReference type="NCBIfam" id="TIGR00450">
    <property type="entry name" value="mnmE_trmE_thdF"/>
    <property type="match status" value="1"/>
</dbReference>
<dbReference type="NCBIfam" id="NF003661">
    <property type="entry name" value="PRK05291.1-3"/>
    <property type="match status" value="1"/>
</dbReference>
<dbReference type="NCBIfam" id="TIGR00231">
    <property type="entry name" value="small_GTP"/>
    <property type="match status" value="1"/>
</dbReference>
<dbReference type="PANTHER" id="PTHR42714">
    <property type="entry name" value="TRNA MODIFICATION GTPASE GTPBP3"/>
    <property type="match status" value="1"/>
</dbReference>
<dbReference type="PANTHER" id="PTHR42714:SF2">
    <property type="entry name" value="TRNA MODIFICATION GTPASE GTPBP3, MITOCHONDRIAL"/>
    <property type="match status" value="1"/>
</dbReference>
<dbReference type="Pfam" id="PF01926">
    <property type="entry name" value="MMR_HSR1"/>
    <property type="match status" value="1"/>
</dbReference>
<dbReference type="Pfam" id="PF12631">
    <property type="entry name" value="MnmE_helical"/>
    <property type="match status" value="1"/>
</dbReference>
<dbReference type="Pfam" id="PF10396">
    <property type="entry name" value="TrmE_N"/>
    <property type="match status" value="1"/>
</dbReference>
<dbReference type="PRINTS" id="PR00326">
    <property type="entry name" value="GTP1OBG"/>
</dbReference>
<dbReference type="SUPFAM" id="SSF52540">
    <property type="entry name" value="P-loop containing nucleoside triphosphate hydrolases"/>
    <property type="match status" value="1"/>
</dbReference>
<dbReference type="PROSITE" id="PS51709">
    <property type="entry name" value="G_TRME"/>
    <property type="match status" value="1"/>
</dbReference>
<accession>Q4UNL0</accession>
<name>MNME_XANC8</name>
<sequence>MNALPSTIVAIATAAGTGGIGIVRLSGPQSVQIAAALGIAGLQSRHARYARFRDAQGEVIDDGIAVWFPAPHSFTGEEVVELQGHGSPVLLRQLVARCIALGARQARAGEFSERAFLNGKLDLAQAEAIADLIAAGDLRAARAARRSLDGVFSRRVDAVSESLTRLRIHVEAAIDFADEPLDTLGGAQVREELTRTRALLAQLLRDAERGRKLRDGLHAVLIGPPNAGKSSLLNALAGSDRAIVTDVAGTTRDTLHEAIQLDGFELTLVDTAGLREGGDAIEREGMRRARAELQRADLALIVLDARDPQAARDALGDAIDAVPRRLWIHNKCDLLAVAGPMDADAIAVSAVTGQGLEHLHTRLRELALGDGIESVDGEFSARTRHVDALHRAEQHADAADLELRYEQLELAAEELRLAHEALGEITGKLSADDLLGKIFSSFCIGK</sequence>
<reference key="1">
    <citation type="journal article" date="2005" name="Genome Res.">
        <title>Comparative and functional genomic analyses of the pathogenicity of phytopathogen Xanthomonas campestris pv. campestris.</title>
        <authorList>
            <person name="Qian W."/>
            <person name="Jia Y."/>
            <person name="Ren S.-X."/>
            <person name="He Y.-Q."/>
            <person name="Feng J.-X."/>
            <person name="Lu L.-F."/>
            <person name="Sun Q."/>
            <person name="Ying G."/>
            <person name="Tang D.-J."/>
            <person name="Tang H."/>
            <person name="Wu W."/>
            <person name="Hao P."/>
            <person name="Wang L."/>
            <person name="Jiang B.-L."/>
            <person name="Zeng S."/>
            <person name="Gu W.-Y."/>
            <person name="Lu G."/>
            <person name="Rong L."/>
            <person name="Tian Y."/>
            <person name="Yao Z."/>
            <person name="Fu G."/>
            <person name="Chen B."/>
            <person name="Fang R."/>
            <person name="Qiang B."/>
            <person name="Chen Z."/>
            <person name="Zhao G.-P."/>
            <person name="Tang J.-L."/>
            <person name="He C."/>
        </authorList>
    </citation>
    <scope>NUCLEOTIDE SEQUENCE [LARGE SCALE GENOMIC DNA]</scope>
    <source>
        <strain>8004</strain>
    </source>
</reference>
<evidence type="ECO:0000255" key="1">
    <source>
        <dbReference type="HAMAP-Rule" id="MF_00379"/>
    </source>
</evidence>
<keyword id="KW-0963">Cytoplasm</keyword>
<keyword id="KW-0342">GTP-binding</keyword>
<keyword id="KW-0378">Hydrolase</keyword>
<keyword id="KW-0460">Magnesium</keyword>
<keyword id="KW-0479">Metal-binding</keyword>
<keyword id="KW-0547">Nucleotide-binding</keyword>
<keyword id="KW-0630">Potassium</keyword>
<keyword id="KW-0819">tRNA processing</keyword>